<evidence type="ECO:0000255" key="1">
    <source>
        <dbReference type="HAMAP-Rule" id="MF_01810"/>
    </source>
</evidence>
<evidence type="ECO:0000256" key="2">
    <source>
        <dbReference type="SAM" id="MobiDB-lite"/>
    </source>
</evidence>
<reference key="1">
    <citation type="journal article" date="2015" name="Genome Announc.">
        <title>Complete genome sequence of Anaeromyxobacter sp. Fw109-5, an anaerobic, metal-reducing bacterium isolated from a contaminated subsurface environment.</title>
        <authorList>
            <person name="Hwang C."/>
            <person name="Copeland A."/>
            <person name="Lucas S."/>
            <person name="Lapidus A."/>
            <person name="Barry K."/>
            <person name="Glavina Del Rio T."/>
            <person name="Dalin E."/>
            <person name="Tice H."/>
            <person name="Pitluck S."/>
            <person name="Sims D."/>
            <person name="Brettin T."/>
            <person name="Bruce D.C."/>
            <person name="Detter J.C."/>
            <person name="Han C.S."/>
            <person name="Schmutz J."/>
            <person name="Larimer F.W."/>
            <person name="Land M.L."/>
            <person name="Hauser L.J."/>
            <person name="Kyrpides N."/>
            <person name="Lykidis A."/>
            <person name="Richardson P."/>
            <person name="Belieav A."/>
            <person name="Sanford R.A."/>
            <person name="Loeffler F.E."/>
            <person name="Fields M.W."/>
        </authorList>
    </citation>
    <scope>NUCLEOTIDE SEQUENCE [LARGE SCALE GENOMIC DNA]</scope>
    <source>
        <strain>Fw109-5</strain>
    </source>
</reference>
<dbReference type="EMBL" id="CP000769">
    <property type="protein sequence ID" value="ABS28684.1"/>
    <property type="molecule type" value="Genomic_DNA"/>
</dbReference>
<dbReference type="RefSeq" id="WP_012099334.1">
    <property type="nucleotide sequence ID" value="NC_009675.1"/>
</dbReference>
<dbReference type="SMR" id="A7HIY8"/>
<dbReference type="STRING" id="404589.Anae109_4506"/>
<dbReference type="KEGG" id="afw:Anae109_4506"/>
<dbReference type="eggNOG" id="COG0706">
    <property type="taxonomic scope" value="Bacteria"/>
</dbReference>
<dbReference type="HOGENOM" id="CLU_016535_3_0_7"/>
<dbReference type="OrthoDB" id="9780552at2"/>
<dbReference type="Proteomes" id="UP000006382">
    <property type="component" value="Chromosome"/>
</dbReference>
<dbReference type="GO" id="GO:0005886">
    <property type="term" value="C:plasma membrane"/>
    <property type="evidence" value="ECO:0007669"/>
    <property type="project" value="UniProtKB-SubCell"/>
</dbReference>
<dbReference type="GO" id="GO:0032977">
    <property type="term" value="F:membrane insertase activity"/>
    <property type="evidence" value="ECO:0007669"/>
    <property type="project" value="InterPro"/>
</dbReference>
<dbReference type="GO" id="GO:0051205">
    <property type="term" value="P:protein insertion into membrane"/>
    <property type="evidence" value="ECO:0007669"/>
    <property type="project" value="TreeGrafter"/>
</dbReference>
<dbReference type="GO" id="GO:0015031">
    <property type="term" value="P:protein transport"/>
    <property type="evidence" value="ECO:0007669"/>
    <property type="project" value="UniProtKB-KW"/>
</dbReference>
<dbReference type="CDD" id="cd20070">
    <property type="entry name" value="5TM_YidC_Alb3"/>
    <property type="match status" value="1"/>
</dbReference>
<dbReference type="CDD" id="cd19961">
    <property type="entry name" value="EcYidC-like_peri"/>
    <property type="match status" value="1"/>
</dbReference>
<dbReference type="Gene3D" id="2.70.98.90">
    <property type="match status" value="1"/>
</dbReference>
<dbReference type="HAMAP" id="MF_01810">
    <property type="entry name" value="YidC_type1"/>
    <property type="match status" value="1"/>
</dbReference>
<dbReference type="InterPro" id="IPR019998">
    <property type="entry name" value="Membr_insert_YidC"/>
</dbReference>
<dbReference type="InterPro" id="IPR028053">
    <property type="entry name" value="Membr_insert_YidC_N"/>
</dbReference>
<dbReference type="InterPro" id="IPR001708">
    <property type="entry name" value="YidC/ALB3/OXA1/COX18"/>
</dbReference>
<dbReference type="InterPro" id="IPR028055">
    <property type="entry name" value="YidC/Oxa/ALB_C"/>
</dbReference>
<dbReference type="InterPro" id="IPR047196">
    <property type="entry name" value="YidC_ALB_C"/>
</dbReference>
<dbReference type="InterPro" id="IPR038221">
    <property type="entry name" value="YidC_periplasmic_sf"/>
</dbReference>
<dbReference type="NCBIfam" id="TIGR03593">
    <property type="entry name" value="yidC_nterm"/>
    <property type="match status" value="1"/>
</dbReference>
<dbReference type="NCBIfam" id="TIGR03592">
    <property type="entry name" value="yidC_oxa1_cterm"/>
    <property type="match status" value="1"/>
</dbReference>
<dbReference type="PANTHER" id="PTHR12428:SF65">
    <property type="entry name" value="CYTOCHROME C OXIDASE ASSEMBLY PROTEIN COX18, MITOCHONDRIAL"/>
    <property type="match status" value="1"/>
</dbReference>
<dbReference type="PANTHER" id="PTHR12428">
    <property type="entry name" value="OXA1"/>
    <property type="match status" value="1"/>
</dbReference>
<dbReference type="Pfam" id="PF02096">
    <property type="entry name" value="60KD_IMP"/>
    <property type="match status" value="1"/>
</dbReference>
<dbReference type="Pfam" id="PF14849">
    <property type="entry name" value="YidC_periplas"/>
    <property type="match status" value="1"/>
</dbReference>
<dbReference type="PRINTS" id="PR00701">
    <property type="entry name" value="60KDINNERMP"/>
</dbReference>
<dbReference type="PRINTS" id="PR01900">
    <property type="entry name" value="YIDCPROTEIN"/>
</dbReference>
<organism>
    <name type="scientific">Anaeromyxobacter sp. (strain Fw109-5)</name>
    <dbReference type="NCBI Taxonomy" id="404589"/>
    <lineage>
        <taxon>Bacteria</taxon>
        <taxon>Pseudomonadati</taxon>
        <taxon>Myxococcota</taxon>
        <taxon>Myxococcia</taxon>
        <taxon>Myxococcales</taxon>
        <taxon>Cystobacterineae</taxon>
        <taxon>Anaeromyxobacteraceae</taxon>
        <taxon>Anaeromyxobacter</taxon>
    </lineage>
</organism>
<keyword id="KW-0997">Cell inner membrane</keyword>
<keyword id="KW-1003">Cell membrane</keyword>
<keyword id="KW-0143">Chaperone</keyword>
<keyword id="KW-0472">Membrane</keyword>
<keyword id="KW-0653">Protein transport</keyword>
<keyword id="KW-1185">Reference proteome</keyword>
<keyword id="KW-0812">Transmembrane</keyword>
<keyword id="KW-1133">Transmembrane helix</keyword>
<keyword id="KW-0813">Transport</keyword>
<comment type="function">
    <text evidence="1">Required for the insertion and/or proper folding and/or complex formation of integral membrane proteins into the membrane. Involved in integration of membrane proteins that insert both dependently and independently of the Sec translocase complex, as well as at least some lipoproteins. Aids folding of multispanning membrane proteins.</text>
</comment>
<comment type="subunit">
    <text evidence="1">Interacts with the Sec translocase complex via SecD. Specifically interacts with transmembrane segments of nascent integral membrane proteins during membrane integration.</text>
</comment>
<comment type="subcellular location">
    <subcellularLocation>
        <location evidence="1">Cell inner membrane</location>
        <topology evidence="1">Multi-pass membrane protein</topology>
    </subcellularLocation>
</comment>
<comment type="similarity">
    <text evidence="1">Belongs to the OXA1/ALB3/YidC family. Type 1 subfamily.</text>
</comment>
<sequence>MGPENRRVLLATVLSVAVLIVWQFVFPSPKPKPQPPKPPEAAQRAEAPAAPAPGQPAAQAPAPAVPQDAPEQLVKLVGDGFEATLTSHGGAVKEIVLQGEKFRRDREGKPVQIDLVRVAKEQPYPLAVVATPELGGAEDAGNDVAARAPMRVVAQDARSATFEGRAGKATVRKTYRLTEKAYELALDLEVQAPATQGGGIVVLYPGYMPPDTKKGGFFSGPPVEFVRPVCRAGEETERFDVDGKEAQEKLQGTVAWAGMDQGYFVSAVFPAQPAGTCLFAKGPVQGSGLTALRLPLDGGSAKFGFTVYSGPKDLDHLRTYGREFESAIDYGAMARPFAFFARLLLFVMRWLERLVANWGLAIILLTVLVKVLLYPLTAKSMQSMNEMRKLQPEIEKLKAKHGNDREKLNLATMQLYQQHKVNPLGGCLPMLIQLPIWFALYATLQTSVELYREPFLWIHDLTVKDPLYVLPIAMGVSQYVMQRFSPQPADNAQAKMMLYFMPGFFTLLMLSVPAGLTLYIFVNNLLSIAQQQFMMRRMPAVPAPAKASK</sequence>
<name>YIDC_ANADF</name>
<proteinExistence type="inferred from homology"/>
<accession>A7HIY8</accession>
<feature type="chain" id="PRO_1000070056" description="Membrane protein insertase YidC">
    <location>
        <begin position="1"/>
        <end position="549"/>
    </location>
</feature>
<feature type="transmembrane region" description="Helical" evidence="1">
    <location>
        <begin position="8"/>
        <end position="28"/>
    </location>
</feature>
<feature type="transmembrane region" description="Helical" evidence="1">
    <location>
        <begin position="328"/>
        <end position="348"/>
    </location>
</feature>
<feature type="transmembrane region" description="Helical" evidence="1">
    <location>
        <begin position="354"/>
        <end position="374"/>
    </location>
</feature>
<feature type="transmembrane region" description="Helical" evidence="1">
    <location>
        <begin position="424"/>
        <end position="444"/>
    </location>
</feature>
<feature type="transmembrane region" description="Helical" evidence="1">
    <location>
        <begin position="502"/>
        <end position="522"/>
    </location>
</feature>
<feature type="region of interest" description="Disordered" evidence="2">
    <location>
        <begin position="29"/>
        <end position="68"/>
    </location>
</feature>
<feature type="compositionally biased region" description="Pro residues" evidence="2">
    <location>
        <begin position="29"/>
        <end position="39"/>
    </location>
</feature>
<feature type="compositionally biased region" description="Low complexity" evidence="2">
    <location>
        <begin position="40"/>
        <end position="49"/>
    </location>
</feature>
<feature type="compositionally biased region" description="Low complexity" evidence="2">
    <location>
        <begin position="55"/>
        <end position="68"/>
    </location>
</feature>
<protein>
    <recommendedName>
        <fullName evidence="1">Membrane protein insertase YidC</fullName>
    </recommendedName>
    <alternativeName>
        <fullName evidence="1">Foldase YidC</fullName>
    </alternativeName>
    <alternativeName>
        <fullName evidence="1">Membrane integrase YidC</fullName>
    </alternativeName>
    <alternativeName>
        <fullName evidence="1">Membrane protein YidC</fullName>
    </alternativeName>
</protein>
<gene>
    <name evidence="1" type="primary">yidC</name>
    <name type="ordered locus">Anae109_4506</name>
</gene>